<keyword id="KW-0184">Conjugation</keyword>
<keyword id="KW-0963">Cytoplasm</keyword>
<keyword id="KW-0238">DNA-binding</keyword>
<keyword id="KW-0614">Plasmid</keyword>
<keyword id="KW-0804">Transcription</keyword>
<keyword id="KW-0805">Transcription regulation</keyword>
<name>TRAM3_ECOLX</name>
<proteinExistence type="evidence at protein level"/>
<geneLocation type="plasmid">
    <name>IncFII R100</name>
    <name>NR1</name>
</geneLocation>
<reference key="1">
    <citation type="journal article" date="1986" name="J. Bacteriol.">
        <title>Cloning, mapping, and sequencing of plasmid R100 traM and finP genes.</title>
        <authorList>
            <person name="Fee B.E."/>
            <person name="Dempsey W.B."/>
        </authorList>
    </citation>
    <scope>NUCLEOTIDE SEQUENCE [GENOMIC DNA]</scope>
    <source>
        <plasmid>IncFII R100 (NR1)</plasmid>
    </source>
</reference>
<reference key="2">
    <citation type="submission" date="1999-05" db="EMBL/GenBank/DDBJ databases">
        <title>Organization and diversification of plasmid genomes: complete nucleotide sequence of the R100 genome.</title>
        <authorList>
            <person name="Sampei G."/>
            <person name="Mizobuchi K."/>
        </authorList>
    </citation>
    <scope>NUCLEOTIDE SEQUENCE [GENOMIC DNA]</scope>
    <source>
        <plasmid>IncFII R100 (NR1)</plasmid>
    </source>
</reference>
<reference key="3">
    <citation type="journal article" date="1988" name="J. Bacteriol.">
        <title>Identification and characterization of the products from the traJ and traY genes of plasmid R100.</title>
        <authorList>
            <person name="Inamoto S."/>
            <person name="Yoshioka Y."/>
            <person name="Ohtsubo E."/>
        </authorList>
    </citation>
    <scope>NUCLEOTIDE SEQUENCE [GENOMIC DNA] OF 123-127</scope>
    <source>
        <plasmid>IncFII R100 (NR1)</plasmid>
    </source>
</reference>
<reference key="4">
    <citation type="journal article" date="2011" name="Nucleic Acids Res.">
        <title>Structural basis of cooperative DNA recognition by the plasmid conjugation factor, TraM.</title>
        <authorList>
            <person name="Wong J.J."/>
            <person name="Lu J."/>
            <person name="Edwards R.A."/>
            <person name="Frost L.S."/>
            <person name="Glover J.N."/>
        </authorList>
    </citation>
    <scope>FUNCTION IN CONFERRING PLASMID SPECIFICITY</scope>
    <scope>MUTAGENESIS OF 3-ARG--ILE-5</scope>
    <source>
        <plasmid>IncFII R100 (NR1)</plasmid>
    </source>
</reference>
<feature type="chain" id="PRO_0000068469" description="Relaxosome protein TraM">
    <location>
        <begin position="1"/>
        <end position="127"/>
    </location>
</feature>
<feature type="mutagenesis site" description="60,000-fold increase in conjugation efficiency of F plasmid, no detectable conjugation of plasmid pED208." evidence="2">
    <original>RVI</original>
    <variation>KVN</variation>
    <location>
        <begin position="3"/>
        <end position="5"/>
    </location>
</feature>
<evidence type="ECO:0000250" key="1"/>
<evidence type="ECO:0000269" key="2">
    <source>
    </source>
</evidence>
<evidence type="ECO:0000305" key="3"/>
<comment type="function">
    <text evidence="1 2">Conjugative DNA transfer (CDT) is the unidirectional transfer of ssDNA plasmid from a donor to a recipient cell. It is the central mechanism by which antibiotic resistance and virulence factors are propagated in bacterial populations. Part of the relaxosome, which facilitates a site- and strand-specific cut in the origin of transfer by TraI, at the nic site. Probably autoregulates its own expression (By similarity). Plasmid specificity is conferred by the TraD-TraM pair.</text>
</comment>
<comment type="subunit">
    <text evidence="1">Homotetramer. 2 homotetramers cooperatively bind to DNA although they do not contact each other; cooperativity is achieved by DNA kinking and unwinding. Part of the relaxosome, a complex composed of plasmid encoded TraI, TraM, TraY and host-encoded IHF which binds to the F plasmid origin of transfer (oriT) in a site- and sequence-specific manner. Interacts with TraD. Also interacts with TraY (By similarity).</text>
</comment>
<comment type="subcellular location">
    <subcellularLocation>
        <location evidence="1">Cytoplasm</location>
    </subcellularLocation>
</comment>
<comment type="similarity">
    <text evidence="3">Belongs to the relaxosome TraM family.</text>
</comment>
<gene>
    <name type="primary">traM</name>
</gene>
<protein>
    <recommendedName>
        <fullName>Relaxosome protein TraM</fullName>
    </recommendedName>
</protein>
<dbReference type="EMBL" id="M13054">
    <property type="protein sequence ID" value="AAA88501.1"/>
    <property type="molecule type" value="Genomic_DNA"/>
</dbReference>
<dbReference type="EMBL" id="AP000342">
    <property type="protein sequence ID" value="BAA78848.1"/>
    <property type="molecule type" value="Genomic_DNA"/>
</dbReference>
<dbReference type="EMBL" id="M20941">
    <property type="status" value="NOT_ANNOTATED_CDS"/>
    <property type="molecule type" value="Genomic_DNA"/>
</dbReference>
<dbReference type="PIR" id="A32014">
    <property type="entry name" value="A32014"/>
</dbReference>
<dbReference type="RefSeq" id="NP_957597.1">
    <property type="nucleotide sequence ID" value="NC_005327.1"/>
</dbReference>
<dbReference type="RefSeq" id="WP_001354030.1">
    <property type="nucleotide sequence ID" value="NZ_WVVN01000094.1"/>
</dbReference>
<dbReference type="RefSeq" id="YP_001096465.1">
    <property type="nucleotide sequence ID" value="NC_009133.1"/>
</dbReference>
<dbReference type="RefSeq" id="YP_006952235.1">
    <property type="nucleotide sequence ID" value="NC_019057.1"/>
</dbReference>
<dbReference type="RefSeq" id="YP_006953319.1">
    <property type="nucleotide sequence ID" value="NC_019071.1"/>
</dbReference>
<dbReference type="RefSeq" id="YP_006953418.1">
    <property type="nucleotide sequence ID" value="NC_019072.1"/>
</dbReference>
<dbReference type="RefSeq" id="YP_006953945.1">
    <property type="nucleotide sequence ID" value="NC_019090.1"/>
</dbReference>
<dbReference type="RefSeq" id="YP_006954266.1">
    <property type="nucleotide sequence ID" value="NC_019095.1"/>
</dbReference>
<dbReference type="RefSeq" id="YP_006990757.1">
    <property type="nucleotide sequence ID" value="NC_019424.1"/>
</dbReference>
<dbReference type="RefSeq" id="YP_007447543.1">
    <property type="nucleotide sequence ID" value="NC_020278.2"/>
</dbReference>
<dbReference type="RefSeq" id="YP_009070964.1">
    <property type="nucleotide sequence ID" value="NC_025177.1"/>
</dbReference>
<dbReference type="RefSeq" id="YP_788059.1">
    <property type="nucleotide sequence ID" value="NC_008460.1"/>
</dbReference>
<dbReference type="SMR" id="P13973"/>
<dbReference type="GO" id="GO:0005737">
    <property type="term" value="C:cytoplasm"/>
    <property type="evidence" value="ECO:0007669"/>
    <property type="project" value="UniProtKB-SubCell"/>
</dbReference>
<dbReference type="GO" id="GO:0003677">
    <property type="term" value="F:DNA binding"/>
    <property type="evidence" value="ECO:0007669"/>
    <property type="project" value="UniProtKB-KW"/>
</dbReference>
<dbReference type="CDD" id="cd14804">
    <property type="entry name" value="Tra_M"/>
    <property type="match status" value="1"/>
</dbReference>
<dbReference type="Gene3D" id="1.10.287.2320">
    <property type="match status" value="1"/>
</dbReference>
<dbReference type="Gene3D" id="1.10.10.450">
    <property type="entry name" value="TraM protein, DNA-binding"/>
    <property type="match status" value="1"/>
</dbReference>
<dbReference type="InterPro" id="IPR010992">
    <property type="entry name" value="IHF-like_DNA-bd_dom_sf"/>
</dbReference>
<dbReference type="InterPro" id="IPR042073">
    <property type="entry name" value="TraM_DNA-bd"/>
</dbReference>
<dbReference type="InterPro" id="IPR007925">
    <property type="entry name" value="TRelaxosome_TraM"/>
</dbReference>
<dbReference type="NCBIfam" id="NF010267">
    <property type="entry name" value="PRK13713.1"/>
    <property type="match status" value="1"/>
</dbReference>
<dbReference type="Pfam" id="PF05261">
    <property type="entry name" value="Tra_M"/>
    <property type="match status" value="1"/>
</dbReference>
<dbReference type="SUPFAM" id="SSF47729">
    <property type="entry name" value="IHF-like DNA-binding proteins"/>
    <property type="match status" value="1"/>
</dbReference>
<dbReference type="SUPFAM" id="SSF140581">
    <property type="entry name" value="TraM-like"/>
    <property type="match status" value="1"/>
</dbReference>
<sequence length="127" mass="14508">MARVILYISNDVYDKVNAIVEQRRQEGARDKDISVSGTASMLLELGLRVYEAQMERKESAFNQTEFNKLLLECVVKTQSSVAKILGIESLSPHVSGNPKFEYANMVEDIREKVSSEMERFFPKNDEE</sequence>
<organism>
    <name type="scientific">Escherichia coli</name>
    <dbReference type="NCBI Taxonomy" id="562"/>
    <lineage>
        <taxon>Bacteria</taxon>
        <taxon>Pseudomonadati</taxon>
        <taxon>Pseudomonadota</taxon>
        <taxon>Gammaproteobacteria</taxon>
        <taxon>Enterobacterales</taxon>
        <taxon>Enterobacteriaceae</taxon>
        <taxon>Escherichia</taxon>
    </lineage>
</organism>
<accession>P13973</accession>
<accession>Q46710</accession>
<accession>Q9WTE3</accession>